<accession>B0K1W0</accession>
<gene>
    <name evidence="1" type="primary">acpP</name>
    <name type="ordered locus">Teth514_1722</name>
</gene>
<sequence>MIFEKVRDIIAEQLGIDPEEITMESSFIDDLGADSLDIVELIMALEEEFDIEIPDEDAEKIKTVGDVVEYLSNLE</sequence>
<comment type="function">
    <text evidence="1">Carrier of the growing fatty acid chain in fatty acid biosynthesis.</text>
</comment>
<comment type="pathway">
    <text evidence="1">Lipid metabolism; fatty acid biosynthesis.</text>
</comment>
<comment type="subcellular location">
    <subcellularLocation>
        <location evidence="1">Cytoplasm</location>
    </subcellularLocation>
</comment>
<comment type="PTM">
    <text evidence="1">4'-phosphopantetheine is transferred from CoA to a specific serine of apo-ACP by AcpS. This modification is essential for activity because fatty acids are bound in thioester linkage to the sulfhydryl of the prosthetic group.</text>
</comment>
<comment type="similarity">
    <text evidence="1">Belongs to the acyl carrier protein (ACP) family.</text>
</comment>
<feature type="chain" id="PRO_1000139071" description="Acyl carrier protein">
    <location>
        <begin position="1"/>
        <end position="75"/>
    </location>
</feature>
<feature type="domain" description="Carrier" evidence="2">
    <location>
        <begin position="1"/>
        <end position="75"/>
    </location>
</feature>
<feature type="modified residue" description="O-(pantetheine 4'-phosphoryl)serine" evidence="2">
    <location>
        <position position="35"/>
    </location>
</feature>
<evidence type="ECO:0000255" key="1">
    <source>
        <dbReference type="HAMAP-Rule" id="MF_01217"/>
    </source>
</evidence>
<evidence type="ECO:0000255" key="2">
    <source>
        <dbReference type="PROSITE-ProRule" id="PRU00258"/>
    </source>
</evidence>
<proteinExistence type="inferred from homology"/>
<reference key="1">
    <citation type="submission" date="2008-01" db="EMBL/GenBank/DDBJ databases">
        <title>Complete sequence of Thermoanaerobacter sp. X514.</title>
        <authorList>
            <consortium name="US DOE Joint Genome Institute"/>
            <person name="Copeland A."/>
            <person name="Lucas S."/>
            <person name="Lapidus A."/>
            <person name="Barry K."/>
            <person name="Glavina del Rio T."/>
            <person name="Dalin E."/>
            <person name="Tice H."/>
            <person name="Pitluck S."/>
            <person name="Bruce D."/>
            <person name="Goodwin L."/>
            <person name="Saunders E."/>
            <person name="Brettin T."/>
            <person name="Detter J.C."/>
            <person name="Han C."/>
            <person name="Schmutz J."/>
            <person name="Larimer F."/>
            <person name="Land M."/>
            <person name="Hauser L."/>
            <person name="Kyrpides N."/>
            <person name="Kim E."/>
            <person name="Hemme C."/>
            <person name="Fields M.W."/>
            <person name="He Z."/>
            <person name="Zhou J."/>
            <person name="Richardson P."/>
        </authorList>
    </citation>
    <scope>NUCLEOTIDE SEQUENCE [LARGE SCALE GENOMIC DNA]</scope>
    <source>
        <strain>X514</strain>
    </source>
</reference>
<keyword id="KW-0963">Cytoplasm</keyword>
<keyword id="KW-0275">Fatty acid biosynthesis</keyword>
<keyword id="KW-0276">Fatty acid metabolism</keyword>
<keyword id="KW-0444">Lipid biosynthesis</keyword>
<keyword id="KW-0443">Lipid metabolism</keyword>
<keyword id="KW-0596">Phosphopantetheine</keyword>
<keyword id="KW-0597">Phosphoprotein</keyword>
<organism>
    <name type="scientific">Thermoanaerobacter sp. (strain X514)</name>
    <dbReference type="NCBI Taxonomy" id="399726"/>
    <lineage>
        <taxon>Bacteria</taxon>
        <taxon>Bacillati</taxon>
        <taxon>Bacillota</taxon>
        <taxon>Clostridia</taxon>
        <taxon>Thermoanaerobacterales</taxon>
        <taxon>Thermoanaerobacteraceae</taxon>
        <taxon>Thermoanaerobacter</taxon>
    </lineage>
</organism>
<protein>
    <recommendedName>
        <fullName evidence="1">Acyl carrier protein</fullName>
        <shortName evidence="1">ACP</shortName>
    </recommendedName>
</protein>
<name>ACP_THEPX</name>
<dbReference type="EMBL" id="CP000923">
    <property type="protein sequence ID" value="ABY93008.1"/>
    <property type="molecule type" value="Genomic_DNA"/>
</dbReference>
<dbReference type="RefSeq" id="WP_003866668.1">
    <property type="nucleotide sequence ID" value="NC_010320.1"/>
</dbReference>
<dbReference type="SMR" id="B0K1W0"/>
<dbReference type="KEGG" id="tex:Teth514_1722"/>
<dbReference type="HOGENOM" id="CLU_108696_5_6_9"/>
<dbReference type="UniPathway" id="UPA00094"/>
<dbReference type="Proteomes" id="UP000002155">
    <property type="component" value="Chromosome"/>
</dbReference>
<dbReference type="GO" id="GO:0005829">
    <property type="term" value="C:cytosol"/>
    <property type="evidence" value="ECO:0007669"/>
    <property type="project" value="TreeGrafter"/>
</dbReference>
<dbReference type="GO" id="GO:0016020">
    <property type="term" value="C:membrane"/>
    <property type="evidence" value="ECO:0007669"/>
    <property type="project" value="GOC"/>
</dbReference>
<dbReference type="GO" id="GO:0000035">
    <property type="term" value="F:acyl binding"/>
    <property type="evidence" value="ECO:0007669"/>
    <property type="project" value="TreeGrafter"/>
</dbReference>
<dbReference type="GO" id="GO:0000036">
    <property type="term" value="F:acyl carrier activity"/>
    <property type="evidence" value="ECO:0007669"/>
    <property type="project" value="UniProtKB-UniRule"/>
</dbReference>
<dbReference type="GO" id="GO:0031177">
    <property type="term" value="F:phosphopantetheine binding"/>
    <property type="evidence" value="ECO:0007669"/>
    <property type="project" value="InterPro"/>
</dbReference>
<dbReference type="GO" id="GO:0009245">
    <property type="term" value="P:lipid A biosynthetic process"/>
    <property type="evidence" value="ECO:0007669"/>
    <property type="project" value="TreeGrafter"/>
</dbReference>
<dbReference type="FunFam" id="1.10.1200.10:FF:000006">
    <property type="entry name" value="Acyl carrier protein"/>
    <property type="match status" value="1"/>
</dbReference>
<dbReference type="Gene3D" id="1.10.1200.10">
    <property type="entry name" value="ACP-like"/>
    <property type="match status" value="1"/>
</dbReference>
<dbReference type="HAMAP" id="MF_01217">
    <property type="entry name" value="Acyl_carrier"/>
    <property type="match status" value="1"/>
</dbReference>
<dbReference type="InterPro" id="IPR003231">
    <property type="entry name" value="ACP"/>
</dbReference>
<dbReference type="InterPro" id="IPR036736">
    <property type="entry name" value="ACP-like_sf"/>
</dbReference>
<dbReference type="InterPro" id="IPR020806">
    <property type="entry name" value="PKS_PP-bd"/>
</dbReference>
<dbReference type="InterPro" id="IPR009081">
    <property type="entry name" value="PP-bd_ACP"/>
</dbReference>
<dbReference type="InterPro" id="IPR006162">
    <property type="entry name" value="Ppantetheine_attach_site"/>
</dbReference>
<dbReference type="NCBIfam" id="TIGR00517">
    <property type="entry name" value="acyl_carrier"/>
    <property type="match status" value="1"/>
</dbReference>
<dbReference type="NCBIfam" id="NF002148">
    <property type="entry name" value="PRK00982.1-2"/>
    <property type="match status" value="1"/>
</dbReference>
<dbReference type="NCBIfam" id="NF002149">
    <property type="entry name" value="PRK00982.1-3"/>
    <property type="match status" value="1"/>
</dbReference>
<dbReference type="NCBIfam" id="NF002150">
    <property type="entry name" value="PRK00982.1-4"/>
    <property type="match status" value="1"/>
</dbReference>
<dbReference type="NCBIfam" id="NF002151">
    <property type="entry name" value="PRK00982.1-5"/>
    <property type="match status" value="1"/>
</dbReference>
<dbReference type="NCBIfam" id="NF009104">
    <property type="entry name" value="PRK12449.1"/>
    <property type="match status" value="1"/>
</dbReference>
<dbReference type="PANTHER" id="PTHR20863">
    <property type="entry name" value="ACYL CARRIER PROTEIN"/>
    <property type="match status" value="1"/>
</dbReference>
<dbReference type="PANTHER" id="PTHR20863:SF76">
    <property type="entry name" value="CARRIER DOMAIN-CONTAINING PROTEIN"/>
    <property type="match status" value="1"/>
</dbReference>
<dbReference type="Pfam" id="PF00550">
    <property type="entry name" value="PP-binding"/>
    <property type="match status" value="1"/>
</dbReference>
<dbReference type="SMART" id="SM00823">
    <property type="entry name" value="PKS_PP"/>
    <property type="match status" value="1"/>
</dbReference>
<dbReference type="SUPFAM" id="SSF47336">
    <property type="entry name" value="ACP-like"/>
    <property type="match status" value="1"/>
</dbReference>
<dbReference type="PROSITE" id="PS50075">
    <property type="entry name" value="CARRIER"/>
    <property type="match status" value="1"/>
</dbReference>
<dbReference type="PROSITE" id="PS00012">
    <property type="entry name" value="PHOSPHOPANTETHEINE"/>
    <property type="match status" value="1"/>
</dbReference>